<name>ANPE_ZOAAM</name>
<feature type="signal peptide" evidence="1">
    <location>
        <begin position="1"/>
        <end position="21"/>
    </location>
</feature>
<feature type="chain" id="PRO_0000001693" description="Ice-structuring protein C10">
    <location>
        <begin position="22"/>
        <end position="87"/>
    </location>
</feature>
<feature type="domain" description="AFP-like" evidence="2">
    <location>
        <begin position="24"/>
        <end position="83"/>
    </location>
</feature>
<feature type="site" description="Important for ice-binding" evidence="1">
    <location>
        <position position="29"/>
    </location>
</feature>
<feature type="site" description="Important for ice-binding" evidence="1">
    <location>
        <position position="34"/>
    </location>
</feature>
<feature type="site" description="Important for ice-binding" evidence="1">
    <location>
        <position position="38"/>
    </location>
</feature>
<feature type="site" description="Important for ice-binding" evidence="1">
    <location>
        <position position="64"/>
    </location>
</feature>
<reference key="1">
    <citation type="journal article" date="1988" name="J. Biol. Chem.">
        <title>Multiple genes provide the basis for antifreeze protein diversity and dosage in the ocean pout, Macrozoarces americanus.</title>
        <authorList>
            <person name="Hew C.-L."/>
            <person name="Wang N.-C."/>
            <person name="Joshi S."/>
            <person name="Fletcher G.L."/>
            <person name="Scott G.K."/>
            <person name="Hayes P.H."/>
            <person name="Buettner B."/>
            <person name="Davies P.L."/>
        </authorList>
    </citation>
    <scope>NUCLEOTIDE SEQUENCE [MRNA]</scope>
</reference>
<evidence type="ECO:0000250" key="1"/>
<evidence type="ECO:0000255" key="2">
    <source>
        <dbReference type="PROSITE-ProRule" id="PRU00021"/>
    </source>
</evidence>
<evidence type="ECO:0000305" key="3"/>
<protein>
    <recommendedName>
        <fullName>Ice-structuring protein C10</fullName>
        <shortName>ISP C10</shortName>
    </recommendedName>
    <alternativeName>
        <fullName>Antifreeze protein C10</fullName>
    </alternativeName>
</protein>
<proteinExistence type="inferred from homology"/>
<dbReference type="PIR" id="A31075">
    <property type="entry name" value="A31075"/>
</dbReference>
<dbReference type="SMR" id="P19605"/>
<dbReference type="GO" id="GO:0005576">
    <property type="term" value="C:extracellular region"/>
    <property type="evidence" value="ECO:0007669"/>
    <property type="project" value="UniProtKB-SubCell"/>
</dbReference>
<dbReference type="CDD" id="cd11617">
    <property type="entry name" value="Antifreeze_III"/>
    <property type="match status" value="1"/>
</dbReference>
<dbReference type="Gene3D" id="3.90.1210.10">
    <property type="entry name" value="Antifreeze-like/N-acetylneuraminic acid synthase C-terminal domain"/>
    <property type="match status" value="1"/>
</dbReference>
<dbReference type="InterPro" id="IPR006190">
    <property type="entry name" value="AFP_Neu5c_C"/>
</dbReference>
<dbReference type="InterPro" id="IPR036732">
    <property type="entry name" value="AFP_Neu5c_C_sf"/>
</dbReference>
<dbReference type="InterPro" id="IPR006013">
    <property type="entry name" value="Antifreeze_III"/>
</dbReference>
<dbReference type="InterPro" id="IPR013974">
    <property type="entry name" value="SAF"/>
</dbReference>
<dbReference type="Pfam" id="PF08666">
    <property type="entry name" value="SAF"/>
    <property type="match status" value="1"/>
</dbReference>
<dbReference type="PRINTS" id="PR00357">
    <property type="entry name" value="ANTIFREEZIII"/>
</dbReference>
<dbReference type="SMART" id="SM00858">
    <property type="entry name" value="SAF"/>
    <property type="match status" value="1"/>
</dbReference>
<dbReference type="SUPFAM" id="SSF51269">
    <property type="entry name" value="AFP III-like domain"/>
    <property type="match status" value="1"/>
</dbReference>
<dbReference type="PROSITE" id="PS50844">
    <property type="entry name" value="AFP_LIKE"/>
    <property type="match status" value="1"/>
</dbReference>
<keyword id="KW-0047">Antifreeze protein</keyword>
<keyword id="KW-0964">Secreted</keyword>
<keyword id="KW-0732">Signal</keyword>
<organism>
    <name type="scientific">Zoarces americanus</name>
    <name type="common">Ocean pout</name>
    <name type="synonym">Macrozoarces americanus</name>
    <dbReference type="NCBI Taxonomy" id="8199"/>
    <lineage>
        <taxon>Eukaryota</taxon>
        <taxon>Metazoa</taxon>
        <taxon>Chordata</taxon>
        <taxon>Craniata</taxon>
        <taxon>Vertebrata</taxon>
        <taxon>Euteleostomi</taxon>
        <taxon>Actinopterygii</taxon>
        <taxon>Neopterygii</taxon>
        <taxon>Teleostei</taxon>
        <taxon>Neoteleostei</taxon>
        <taxon>Acanthomorphata</taxon>
        <taxon>Eupercaria</taxon>
        <taxon>Perciformes</taxon>
        <taxon>Cottioidei</taxon>
        <taxon>Zoarcales</taxon>
        <taxon>Zoarcidae</taxon>
        <taxon>Zoarcinae</taxon>
        <taxon>Zoarces</taxon>
    </lineage>
</organism>
<sequence>MKSVILTGLLFVLLCVDHMTASQSVVATQLIPMNSALTPVMMEGKVTNPIGIPFAEMSQMVGKQVNRPVAKGQTIMPNMVKTYAAGK</sequence>
<comment type="function">
    <text evidence="1">Contributes to protect fish blood from freezing at subzero sea water temperatures. Lowers the blood freezing point. Binds to nascent ice crystals and prevents further growth (By similarity).</text>
</comment>
<comment type="subcellular location">
    <subcellularLocation>
        <location evidence="1">Secreted</location>
    </subcellularLocation>
</comment>
<comment type="similarity">
    <text evidence="3">Belongs to the type-III AFP family.</text>
</comment>
<accession>P19605</accession>